<name>ASNA_SALPC</name>
<protein>
    <recommendedName>
        <fullName evidence="1">Aspartate--ammonia ligase</fullName>
        <ecNumber evidence="1">6.3.1.1</ecNumber>
    </recommendedName>
    <alternativeName>
        <fullName evidence="1">Asparagine synthetase A</fullName>
    </alternativeName>
</protein>
<proteinExistence type="inferred from homology"/>
<comment type="catalytic activity">
    <reaction evidence="1">
        <text>L-aspartate + NH4(+) + ATP = L-asparagine + AMP + diphosphate + H(+)</text>
        <dbReference type="Rhea" id="RHEA:11372"/>
        <dbReference type="ChEBI" id="CHEBI:15378"/>
        <dbReference type="ChEBI" id="CHEBI:28938"/>
        <dbReference type="ChEBI" id="CHEBI:29991"/>
        <dbReference type="ChEBI" id="CHEBI:30616"/>
        <dbReference type="ChEBI" id="CHEBI:33019"/>
        <dbReference type="ChEBI" id="CHEBI:58048"/>
        <dbReference type="ChEBI" id="CHEBI:456215"/>
        <dbReference type="EC" id="6.3.1.1"/>
    </reaction>
</comment>
<comment type="pathway">
    <text evidence="1">Amino-acid biosynthesis; L-asparagine biosynthesis; L-asparagine from L-aspartate (ammonia route): step 1/1.</text>
</comment>
<comment type="subcellular location">
    <subcellularLocation>
        <location evidence="1">Cytoplasm</location>
    </subcellularLocation>
</comment>
<comment type="similarity">
    <text evidence="1">Belongs to the class-II aminoacyl-tRNA synthetase family. AsnA subfamily.</text>
</comment>
<dbReference type="EC" id="6.3.1.1" evidence="1"/>
<dbReference type="EMBL" id="CP000857">
    <property type="protein sequence ID" value="ACN48030.1"/>
    <property type="molecule type" value="Genomic_DNA"/>
</dbReference>
<dbReference type="RefSeq" id="WP_000845123.1">
    <property type="nucleotide sequence ID" value="NC_012125.1"/>
</dbReference>
<dbReference type="SMR" id="C0Q2P4"/>
<dbReference type="KEGG" id="sei:SPC_3962"/>
<dbReference type="HOGENOM" id="CLU_071543_0_0_6"/>
<dbReference type="UniPathway" id="UPA00134">
    <property type="reaction ID" value="UER00194"/>
</dbReference>
<dbReference type="Proteomes" id="UP000001599">
    <property type="component" value="Chromosome"/>
</dbReference>
<dbReference type="GO" id="GO:0005829">
    <property type="term" value="C:cytosol"/>
    <property type="evidence" value="ECO:0007669"/>
    <property type="project" value="TreeGrafter"/>
</dbReference>
<dbReference type="GO" id="GO:0004071">
    <property type="term" value="F:aspartate-ammonia ligase activity"/>
    <property type="evidence" value="ECO:0007669"/>
    <property type="project" value="UniProtKB-UniRule"/>
</dbReference>
<dbReference type="GO" id="GO:0005524">
    <property type="term" value="F:ATP binding"/>
    <property type="evidence" value="ECO:0007669"/>
    <property type="project" value="UniProtKB-UniRule"/>
</dbReference>
<dbReference type="GO" id="GO:0070981">
    <property type="term" value="P:L-asparagine biosynthetic process"/>
    <property type="evidence" value="ECO:0007669"/>
    <property type="project" value="UniProtKB-UniRule"/>
</dbReference>
<dbReference type="CDD" id="cd00645">
    <property type="entry name" value="AsnA"/>
    <property type="match status" value="1"/>
</dbReference>
<dbReference type="FunFam" id="3.30.930.10:FF:000025">
    <property type="entry name" value="Aspartate--ammonia ligase"/>
    <property type="match status" value="1"/>
</dbReference>
<dbReference type="Gene3D" id="3.30.930.10">
    <property type="entry name" value="Bira Bifunctional Protein, Domain 2"/>
    <property type="match status" value="1"/>
</dbReference>
<dbReference type="HAMAP" id="MF_00555">
    <property type="entry name" value="AsnA"/>
    <property type="match status" value="1"/>
</dbReference>
<dbReference type="InterPro" id="IPR006195">
    <property type="entry name" value="aa-tRNA-synth_II"/>
</dbReference>
<dbReference type="InterPro" id="IPR045864">
    <property type="entry name" value="aa-tRNA-synth_II/BPL/LPL"/>
</dbReference>
<dbReference type="InterPro" id="IPR004618">
    <property type="entry name" value="AsnA"/>
</dbReference>
<dbReference type="NCBIfam" id="TIGR00669">
    <property type="entry name" value="asnA"/>
    <property type="match status" value="1"/>
</dbReference>
<dbReference type="PANTHER" id="PTHR30073">
    <property type="entry name" value="ASPARTATE--AMMONIA LIGASE"/>
    <property type="match status" value="1"/>
</dbReference>
<dbReference type="PANTHER" id="PTHR30073:SF5">
    <property type="entry name" value="ASPARTATE--AMMONIA LIGASE"/>
    <property type="match status" value="1"/>
</dbReference>
<dbReference type="Pfam" id="PF03590">
    <property type="entry name" value="AsnA"/>
    <property type="match status" value="1"/>
</dbReference>
<dbReference type="PIRSF" id="PIRSF001555">
    <property type="entry name" value="Asp_ammon_ligase"/>
    <property type="match status" value="1"/>
</dbReference>
<dbReference type="SUPFAM" id="SSF55681">
    <property type="entry name" value="Class II aaRS and biotin synthetases"/>
    <property type="match status" value="1"/>
</dbReference>
<dbReference type="PROSITE" id="PS50862">
    <property type="entry name" value="AA_TRNA_LIGASE_II"/>
    <property type="match status" value="1"/>
</dbReference>
<reference key="1">
    <citation type="journal article" date="2009" name="PLoS ONE">
        <title>Salmonella paratyphi C: genetic divergence from Salmonella choleraesuis and pathogenic convergence with Salmonella typhi.</title>
        <authorList>
            <person name="Liu W.-Q."/>
            <person name="Feng Y."/>
            <person name="Wang Y."/>
            <person name="Zou Q.-H."/>
            <person name="Chen F."/>
            <person name="Guo J.-T."/>
            <person name="Peng Y.-H."/>
            <person name="Jin Y."/>
            <person name="Li Y.-G."/>
            <person name="Hu S.-N."/>
            <person name="Johnston R.N."/>
            <person name="Liu G.-R."/>
            <person name="Liu S.-L."/>
        </authorList>
    </citation>
    <scope>NUCLEOTIDE SEQUENCE [LARGE SCALE GENOMIC DNA]</scope>
    <source>
        <strain>RKS4594</strain>
    </source>
</reference>
<feature type="chain" id="PRO_1000146696" description="Aspartate--ammonia ligase">
    <location>
        <begin position="1"/>
        <end position="330"/>
    </location>
</feature>
<organism>
    <name type="scientific">Salmonella paratyphi C (strain RKS4594)</name>
    <dbReference type="NCBI Taxonomy" id="476213"/>
    <lineage>
        <taxon>Bacteria</taxon>
        <taxon>Pseudomonadati</taxon>
        <taxon>Pseudomonadota</taxon>
        <taxon>Gammaproteobacteria</taxon>
        <taxon>Enterobacterales</taxon>
        <taxon>Enterobacteriaceae</taxon>
        <taxon>Salmonella</taxon>
    </lineage>
</organism>
<gene>
    <name evidence="1" type="primary">asnA</name>
    <name type="ordered locus">SPC_3962</name>
</gene>
<evidence type="ECO:0000255" key="1">
    <source>
        <dbReference type="HAMAP-Rule" id="MF_00555"/>
    </source>
</evidence>
<sequence length="330" mass="36838">MKTAYIAKQRQISFVKSHFSRQLEERLGLIEVQAPILSRVGDGTQDNLSGCEKAVQVKVKALPDAQFEVVHSLAKWKRQTLGQHDFSAGEGLYTHMKALRPDEDRLSPLHSVYVDQWDWERVMGDGERQFSTLKSTVEAIWAGIKATEAEVHKQFGLAPFLPEQIQFVHSQELLSRYPDLDAKGRERAIAKELGAVFLVGIGGKLSDGHRHDVRAPDYDDWSSASELGYAGLNGDILVWNPVLEDAFELSSMGIRVDADTLMRQLALTGDEDRLQLEWHQALLRGEMPQTIGGGIGQSRLTMLLLQLPHIGQVQCGVWPAQVRESIPAIL</sequence>
<accession>C0Q2P4</accession>
<keyword id="KW-0028">Amino-acid biosynthesis</keyword>
<keyword id="KW-0061">Asparagine biosynthesis</keyword>
<keyword id="KW-0067">ATP-binding</keyword>
<keyword id="KW-0963">Cytoplasm</keyword>
<keyword id="KW-0436">Ligase</keyword>
<keyword id="KW-0547">Nucleotide-binding</keyword>